<feature type="chain" id="PRO_1000199403" description="Proline--tRNA ligase">
    <location>
        <begin position="1"/>
        <end position="581"/>
    </location>
</feature>
<evidence type="ECO:0000255" key="1">
    <source>
        <dbReference type="HAMAP-Rule" id="MF_01569"/>
    </source>
</evidence>
<organism>
    <name type="scientific">Leptothrix cholodnii (strain ATCC 51168 / LMG 8142 / SP-6)</name>
    <name type="common">Leptothrix discophora (strain SP-6)</name>
    <dbReference type="NCBI Taxonomy" id="395495"/>
    <lineage>
        <taxon>Bacteria</taxon>
        <taxon>Pseudomonadati</taxon>
        <taxon>Pseudomonadota</taxon>
        <taxon>Betaproteobacteria</taxon>
        <taxon>Burkholderiales</taxon>
        <taxon>Sphaerotilaceae</taxon>
        <taxon>Leptothrix</taxon>
    </lineage>
</organism>
<reference key="1">
    <citation type="submission" date="2008-03" db="EMBL/GenBank/DDBJ databases">
        <title>Complete sequence of Leptothrix cholodnii SP-6.</title>
        <authorList>
            <consortium name="US DOE Joint Genome Institute"/>
            <person name="Copeland A."/>
            <person name="Lucas S."/>
            <person name="Lapidus A."/>
            <person name="Glavina del Rio T."/>
            <person name="Dalin E."/>
            <person name="Tice H."/>
            <person name="Bruce D."/>
            <person name="Goodwin L."/>
            <person name="Pitluck S."/>
            <person name="Chertkov O."/>
            <person name="Brettin T."/>
            <person name="Detter J.C."/>
            <person name="Han C."/>
            <person name="Kuske C.R."/>
            <person name="Schmutz J."/>
            <person name="Larimer F."/>
            <person name="Land M."/>
            <person name="Hauser L."/>
            <person name="Kyrpides N."/>
            <person name="Lykidis A."/>
            <person name="Emerson D."/>
            <person name="Richardson P."/>
        </authorList>
    </citation>
    <scope>NUCLEOTIDE SEQUENCE [LARGE SCALE GENOMIC DNA]</scope>
    <source>
        <strain>ATCC 51168 / LMG 8142 / SP-6</strain>
    </source>
</reference>
<gene>
    <name evidence="1" type="primary">proS</name>
    <name type="ordered locus">Lcho_0574</name>
</gene>
<protein>
    <recommendedName>
        <fullName evidence="1">Proline--tRNA ligase</fullName>
        <ecNumber evidence="1">6.1.1.15</ecNumber>
    </recommendedName>
    <alternativeName>
        <fullName evidence="1">Prolyl-tRNA synthetase</fullName>
        <shortName evidence="1">ProRS</shortName>
    </alternativeName>
</protein>
<comment type="function">
    <text evidence="1">Catalyzes the attachment of proline to tRNA(Pro) in a two-step reaction: proline is first activated by ATP to form Pro-AMP and then transferred to the acceptor end of tRNA(Pro). As ProRS can inadvertently accommodate and process non-cognate amino acids such as alanine and cysteine, to avoid such errors it has two additional distinct editing activities against alanine. One activity is designated as 'pretransfer' editing and involves the tRNA(Pro)-independent hydrolysis of activated Ala-AMP. The other activity is designated 'posttransfer' editing and involves deacylation of mischarged Ala-tRNA(Pro). The misacylated Cys-tRNA(Pro) is not edited by ProRS.</text>
</comment>
<comment type="catalytic activity">
    <reaction evidence="1">
        <text>tRNA(Pro) + L-proline + ATP = L-prolyl-tRNA(Pro) + AMP + diphosphate</text>
        <dbReference type="Rhea" id="RHEA:14305"/>
        <dbReference type="Rhea" id="RHEA-COMP:9700"/>
        <dbReference type="Rhea" id="RHEA-COMP:9702"/>
        <dbReference type="ChEBI" id="CHEBI:30616"/>
        <dbReference type="ChEBI" id="CHEBI:33019"/>
        <dbReference type="ChEBI" id="CHEBI:60039"/>
        <dbReference type="ChEBI" id="CHEBI:78442"/>
        <dbReference type="ChEBI" id="CHEBI:78532"/>
        <dbReference type="ChEBI" id="CHEBI:456215"/>
        <dbReference type="EC" id="6.1.1.15"/>
    </reaction>
</comment>
<comment type="subunit">
    <text evidence="1">Homodimer.</text>
</comment>
<comment type="subcellular location">
    <subcellularLocation>
        <location evidence="1">Cytoplasm</location>
    </subcellularLocation>
</comment>
<comment type="domain">
    <text evidence="1">Consists of three domains: the N-terminal catalytic domain, the editing domain and the C-terminal anticodon-binding domain.</text>
</comment>
<comment type="similarity">
    <text evidence="1">Belongs to the class-II aminoacyl-tRNA synthetase family. ProS type 1 subfamily.</text>
</comment>
<proteinExistence type="inferred from homology"/>
<accession>B1XYW5</accession>
<name>SYP_LEPCP</name>
<dbReference type="EC" id="6.1.1.15" evidence="1"/>
<dbReference type="EMBL" id="CP001013">
    <property type="protein sequence ID" value="ACB32849.1"/>
    <property type="molecule type" value="Genomic_DNA"/>
</dbReference>
<dbReference type="RefSeq" id="WP_012345611.1">
    <property type="nucleotide sequence ID" value="NC_010524.1"/>
</dbReference>
<dbReference type="SMR" id="B1XYW5"/>
<dbReference type="STRING" id="395495.Lcho_0574"/>
<dbReference type="KEGG" id="lch:Lcho_0574"/>
<dbReference type="eggNOG" id="COG0442">
    <property type="taxonomic scope" value="Bacteria"/>
</dbReference>
<dbReference type="HOGENOM" id="CLU_016739_0_0_4"/>
<dbReference type="OrthoDB" id="9809052at2"/>
<dbReference type="Proteomes" id="UP000001693">
    <property type="component" value="Chromosome"/>
</dbReference>
<dbReference type="GO" id="GO:0005829">
    <property type="term" value="C:cytosol"/>
    <property type="evidence" value="ECO:0007669"/>
    <property type="project" value="TreeGrafter"/>
</dbReference>
<dbReference type="GO" id="GO:0002161">
    <property type="term" value="F:aminoacyl-tRNA deacylase activity"/>
    <property type="evidence" value="ECO:0007669"/>
    <property type="project" value="InterPro"/>
</dbReference>
<dbReference type="GO" id="GO:0005524">
    <property type="term" value="F:ATP binding"/>
    <property type="evidence" value="ECO:0007669"/>
    <property type="project" value="UniProtKB-UniRule"/>
</dbReference>
<dbReference type="GO" id="GO:0004827">
    <property type="term" value="F:proline-tRNA ligase activity"/>
    <property type="evidence" value="ECO:0007669"/>
    <property type="project" value="UniProtKB-UniRule"/>
</dbReference>
<dbReference type="GO" id="GO:0006433">
    <property type="term" value="P:prolyl-tRNA aminoacylation"/>
    <property type="evidence" value="ECO:0007669"/>
    <property type="project" value="UniProtKB-UniRule"/>
</dbReference>
<dbReference type="CDD" id="cd04334">
    <property type="entry name" value="ProRS-INS"/>
    <property type="match status" value="1"/>
</dbReference>
<dbReference type="CDD" id="cd00861">
    <property type="entry name" value="ProRS_anticodon_short"/>
    <property type="match status" value="1"/>
</dbReference>
<dbReference type="CDD" id="cd00779">
    <property type="entry name" value="ProRS_core_prok"/>
    <property type="match status" value="1"/>
</dbReference>
<dbReference type="FunFam" id="3.30.930.10:FF:000042">
    <property type="entry name" value="probable proline--tRNA ligase, mitochondrial"/>
    <property type="match status" value="1"/>
</dbReference>
<dbReference type="FunFam" id="3.30.930.10:FF:000097">
    <property type="entry name" value="Proline--tRNA ligase"/>
    <property type="match status" value="1"/>
</dbReference>
<dbReference type="Gene3D" id="3.40.50.800">
    <property type="entry name" value="Anticodon-binding domain"/>
    <property type="match status" value="1"/>
</dbReference>
<dbReference type="Gene3D" id="3.30.930.10">
    <property type="entry name" value="Bira Bifunctional Protein, Domain 2"/>
    <property type="match status" value="2"/>
</dbReference>
<dbReference type="Gene3D" id="3.90.960.10">
    <property type="entry name" value="YbaK/aminoacyl-tRNA synthetase-associated domain"/>
    <property type="match status" value="1"/>
</dbReference>
<dbReference type="HAMAP" id="MF_01569">
    <property type="entry name" value="Pro_tRNA_synth_type1"/>
    <property type="match status" value="1"/>
</dbReference>
<dbReference type="InterPro" id="IPR002314">
    <property type="entry name" value="aa-tRNA-synt_IIb"/>
</dbReference>
<dbReference type="InterPro" id="IPR006195">
    <property type="entry name" value="aa-tRNA-synth_II"/>
</dbReference>
<dbReference type="InterPro" id="IPR045864">
    <property type="entry name" value="aa-tRNA-synth_II/BPL/LPL"/>
</dbReference>
<dbReference type="InterPro" id="IPR004154">
    <property type="entry name" value="Anticodon-bd"/>
</dbReference>
<dbReference type="InterPro" id="IPR036621">
    <property type="entry name" value="Anticodon-bd_dom_sf"/>
</dbReference>
<dbReference type="InterPro" id="IPR002316">
    <property type="entry name" value="Pro-tRNA-ligase_IIa"/>
</dbReference>
<dbReference type="InterPro" id="IPR004500">
    <property type="entry name" value="Pro-tRNA-synth_IIa_bac-type"/>
</dbReference>
<dbReference type="InterPro" id="IPR023717">
    <property type="entry name" value="Pro-tRNA-Synthase_IIa_type1"/>
</dbReference>
<dbReference type="InterPro" id="IPR050062">
    <property type="entry name" value="Pro-tRNA_synthetase"/>
</dbReference>
<dbReference type="InterPro" id="IPR044140">
    <property type="entry name" value="ProRS_anticodon_short"/>
</dbReference>
<dbReference type="InterPro" id="IPR033730">
    <property type="entry name" value="ProRS_core_prok"/>
</dbReference>
<dbReference type="InterPro" id="IPR036754">
    <property type="entry name" value="YbaK/aa-tRNA-synt-asso_dom_sf"/>
</dbReference>
<dbReference type="InterPro" id="IPR007214">
    <property type="entry name" value="YbaK/aa-tRNA-synth-assoc-dom"/>
</dbReference>
<dbReference type="NCBIfam" id="NF006625">
    <property type="entry name" value="PRK09194.1"/>
    <property type="match status" value="1"/>
</dbReference>
<dbReference type="NCBIfam" id="TIGR00409">
    <property type="entry name" value="proS_fam_II"/>
    <property type="match status" value="1"/>
</dbReference>
<dbReference type="PANTHER" id="PTHR42753">
    <property type="entry name" value="MITOCHONDRIAL RIBOSOME PROTEIN L39/PROLYL-TRNA LIGASE FAMILY MEMBER"/>
    <property type="match status" value="1"/>
</dbReference>
<dbReference type="PANTHER" id="PTHR42753:SF2">
    <property type="entry name" value="PROLINE--TRNA LIGASE"/>
    <property type="match status" value="1"/>
</dbReference>
<dbReference type="Pfam" id="PF03129">
    <property type="entry name" value="HGTP_anticodon"/>
    <property type="match status" value="1"/>
</dbReference>
<dbReference type="Pfam" id="PF00587">
    <property type="entry name" value="tRNA-synt_2b"/>
    <property type="match status" value="1"/>
</dbReference>
<dbReference type="Pfam" id="PF04073">
    <property type="entry name" value="tRNA_edit"/>
    <property type="match status" value="1"/>
</dbReference>
<dbReference type="PIRSF" id="PIRSF001535">
    <property type="entry name" value="ProRS_1"/>
    <property type="match status" value="1"/>
</dbReference>
<dbReference type="PRINTS" id="PR01046">
    <property type="entry name" value="TRNASYNTHPRO"/>
</dbReference>
<dbReference type="SUPFAM" id="SSF52954">
    <property type="entry name" value="Class II aaRS ABD-related"/>
    <property type="match status" value="1"/>
</dbReference>
<dbReference type="SUPFAM" id="SSF55681">
    <property type="entry name" value="Class II aaRS and biotin synthetases"/>
    <property type="match status" value="1"/>
</dbReference>
<dbReference type="SUPFAM" id="SSF55826">
    <property type="entry name" value="YbaK/ProRS associated domain"/>
    <property type="match status" value="1"/>
</dbReference>
<dbReference type="PROSITE" id="PS50862">
    <property type="entry name" value="AA_TRNA_LIGASE_II"/>
    <property type="match status" value="1"/>
</dbReference>
<sequence length="581" mass="63823">MKASQFFIATLKEAPADAEVKSHQLMMRAGMIKRLGAGIYNYMPMGLRVIRKVEAIIREEMNRAGAVELLMPVVQPAELWQETGRFDKMGPELLRVKDRHDRDFIIQPTSEEVVTDIARQELRSYKQLPKNFYHIQTKFRDERRPRFGIMRGREFTMKDAYSFDRDAASAARSYDAMFAAYKRIFDRFGLQYRAVAADTGAIGGDLSHEFQVIADTGEDAIVYCPTSDYAANIELAEAVSLIAERGAATESMAKTPTPGKSTCADVAQLLNLPLARTVKSLVLATDELNEAGDVAKTTVWLLLVRGDHDMNEVKVGKVDGLKAGFRFATVAEIESHFGCKPGYLGPIGLKKPVKVIADRTVAQMADFICGANEIDFHLTGINWGRDLPEPDAVADIRNVVEGDPSPDGQGVLAIQRGIEVGHVFFLGTKYSKAMNATYLDENGKPQFMEMGCYGIGVTRILGAAIEQKHDARGILWPDAIAPFTVVVCPIGYDRSAEVKAAADALHDELQAAGIDVMLDDRGERPGAMFADWELIGVPHRVVISDRGLKAGQVEYQGRCDEAASTVPAAEVAAFVKGRLRS</sequence>
<keyword id="KW-0030">Aminoacyl-tRNA synthetase</keyword>
<keyword id="KW-0067">ATP-binding</keyword>
<keyword id="KW-0963">Cytoplasm</keyword>
<keyword id="KW-0436">Ligase</keyword>
<keyword id="KW-0547">Nucleotide-binding</keyword>
<keyword id="KW-0648">Protein biosynthesis</keyword>
<keyword id="KW-1185">Reference proteome</keyword>